<sequence>MSRVGKYPVSVPSGVTVQITGPEVTVKGKLGESKLTLRDNVEVTLDGNLIWVKPKNETKHARMMWGTTRAHLNNMVKGVSDGFTVNLEINGVGYRAAVEGKSLKLQLGYSHDIEYPIPDDVTMKCEKPTAISISGRDKRQVGQIAAEIRAFRGPEPYKGKGIKYETETILRKEGKKK</sequence>
<dbReference type="EMBL" id="AP007255">
    <property type="protein sequence ID" value="BAE51919.1"/>
    <property type="molecule type" value="Genomic_DNA"/>
</dbReference>
<dbReference type="RefSeq" id="WP_011385489.1">
    <property type="nucleotide sequence ID" value="NC_007626.1"/>
</dbReference>
<dbReference type="SMR" id="Q2W2K6"/>
<dbReference type="STRING" id="342108.amb3115"/>
<dbReference type="KEGG" id="mag:amb3115"/>
<dbReference type="HOGENOM" id="CLU_065464_1_2_5"/>
<dbReference type="OrthoDB" id="9805007at2"/>
<dbReference type="Proteomes" id="UP000007058">
    <property type="component" value="Chromosome"/>
</dbReference>
<dbReference type="GO" id="GO:0022625">
    <property type="term" value="C:cytosolic large ribosomal subunit"/>
    <property type="evidence" value="ECO:0007669"/>
    <property type="project" value="TreeGrafter"/>
</dbReference>
<dbReference type="GO" id="GO:0019843">
    <property type="term" value="F:rRNA binding"/>
    <property type="evidence" value="ECO:0007669"/>
    <property type="project" value="UniProtKB-UniRule"/>
</dbReference>
<dbReference type="GO" id="GO:0003735">
    <property type="term" value="F:structural constituent of ribosome"/>
    <property type="evidence" value="ECO:0007669"/>
    <property type="project" value="InterPro"/>
</dbReference>
<dbReference type="GO" id="GO:0002181">
    <property type="term" value="P:cytoplasmic translation"/>
    <property type="evidence" value="ECO:0007669"/>
    <property type="project" value="TreeGrafter"/>
</dbReference>
<dbReference type="FunFam" id="3.90.930.12:FF:000001">
    <property type="entry name" value="50S ribosomal protein L6"/>
    <property type="match status" value="1"/>
</dbReference>
<dbReference type="FunFam" id="3.90.930.12:FF:000002">
    <property type="entry name" value="50S ribosomal protein L6"/>
    <property type="match status" value="1"/>
</dbReference>
<dbReference type="Gene3D" id="3.90.930.12">
    <property type="entry name" value="Ribosomal protein L6, alpha-beta domain"/>
    <property type="match status" value="2"/>
</dbReference>
<dbReference type="HAMAP" id="MF_01365_B">
    <property type="entry name" value="Ribosomal_uL6_B"/>
    <property type="match status" value="1"/>
</dbReference>
<dbReference type="InterPro" id="IPR000702">
    <property type="entry name" value="Ribosomal_uL6-like"/>
</dbReference>
<dbReference type="InterPro" id="IPR036789">
    <property type="entry name" value="Ribosomal_uL6-like_a/b-dom_sf"/>
</dbReference>
<dbReference type="InterPro" id="IPR020040">
    <property type="entry name" value="Ribosomal_uL6_a/b-dom"/>
</dbReference>
<dbReference type="InterPro" id="IPR019906">
    <property type="entry name" value="Ribosomal_uL6_bac-type"/>
</dbReference>
<dbReference type="InterPro" id="IPR002358">
    <property type="entry name" value="Ribosomal_uL6_CS"/>
</dbReference>
<dbReference type="NCBIfam" id="TIGR03654">
    <property type="entry name" value="L6_bact"/>
    <property type="match status" value="1"/>
</dbReference>
<dbReference type="PANTHER" id="PTHR11655">
    <property type="entry name" value="60S/50S RIBOSOMAL PROTEIN L6/L9"/>
    <property type="match status" value="1"/>
</dbReference>
<dbReference type="PANTHER" id="PTHR11655:SF14">
    <property type="entry name" value="LARGE RIBOSOMAL SUBUNIT PROTEIN UL6M"/>
    <property type="match status" value="1"/>
</dbReference>
<dbReference type="Pfam" id="PF00347">
    <property type="entry name" value="Ribosomal_L6"/>
    <property type="match status" value="2"/>
</dbReference>
<dbReference type="PIRSF" id="PIRSF002162">
    <property type="entry name" value="Ribosomal_L6"/>
    <property type="match status" value="1"/>
</dbReference>
<dbReference type="PRINTS" id="PR00059">
    <property type="entry name" value="RIBOSOMALL6"/>
</dbReference>
<dbReference type="SUPFAM" id="SSF56053">
    <property type="entry name" value="Ribosomal protein L6"/>
    <property type="match status" value="2"/>
</dbReference>
<dbReference type="PROSITE" id="PS00525">
    <property type="entry name" value="RIBOSOMAL_L6_1"/>
    <property type="match status" value="1"/>
</dbReference>
<proteinExistence type="inferred from homology"/>
<feature type="chain" id="PRO_0000265265" description="Large ribosomal subunit protein uL6">
    <location>
        <begin position="1"/>
        <end position="177"/>
    </location>
</feature>
<comment type="function">
    <text evidence="1">This protein binds to the 23S rRNA, and is important in its secondary structure. It is located near the subunit interface in the base of the L7/L12 stalk, and near the tRNA binding site of the peptidyltransferase center.</text>
</comment>
<comment type="subunit">
    <text evidence="1">Part of the 50S ribosomal subunit.</text>
</comment>
<comment type="similarity">
    <text evidence="1">Belongs to the universal ribosomal protein uL6 family.</text>
</comment>
<organism>
    <name type="scientific">Paramagnetospirillum magneticum (strain ATCC 700264 / AMB-1)</name>
    <name type="common">Magnetospirillum magneticum</name>
    <dbReference type="NCBI Taxonomy" id="342108"/>
    <lineage>
        <taxon>Bacteria</taxon>
        <taxon>Pseudomonadati</taxon>
        <taxon>Pseudomonadota</taxon>
        <taxon>Alphaproteobacteria</taxon>
        <taxon>Rhodospirillales</taxon>
        <taxon>Magnetospirillaceae</taxon>
        <taxon>Paramagnetospirillum</taxon>
    </lineage>
</organism>
<reference key="1">
    <citation type="journal article" date="2005" name="DNA Res.">
        <title>Complete genome sequence of the facultative anaerobic magnetotactic bacterium Magnetospirillum sp. strain AMB-1.</title>
        <authorList>
            <person name="Matsunaga T."/>
            <person name="Okamura Y."/>
            <person name="Fukuda Y."/>
            <person name="Wahyudi A.T."/>
            <person name="Murase Y."/>
            <person name="Takeyama H."/>
        </authorList>
    </citation>
    <scope>NUCLEOTIDE SEQUENCE [LARGE SCALE GENOMIC DNA]</scope>
    <source>
        <strain>ATCC 700264 / AMB-1</strain>
    </source>
</reference>
<name>RL6_PARM1</name>
<protein>
    <recommendedName>
        <fullName evidence="1">Large ribosomal subunit protein uL6</fullName>
    </recommendedName>
    <alternativeName>
        <fullName evidence="2">50S ribosomal protein L6</fullName>
    </alternativeName>
</protein>
<keyword id="KW-0687">Ribonucleoprotein</keyword>
<keyword id="KW-0689">Ribosomal protein</keyword>
<keyword id="KW-0694">RNA-binding</keyword>
<keyword id="KW-0699">rRNA-binding</keyword>
<evidence type="ECO:0000255" key="1">
    <source>
        <dbReference type="HAMAP-Rule" id="MF_01365"/>
    </source>
</evidence>
<evidence type="ECO:0000305" key="2"/>
<accession>Q2W2K6</accession>
<gene>
    <name evidence="1" type="primary">rplF</name>
    <name type="ordered locus">amb3115</name>
</gene>